<comment type="function">
    <text evidence="1">Aminotransferase that catalyzes the conversion of aromatic amino acids and 2-oxoglutarate into corresponding aromatic oxo acids and L-glutamate.</text>
</comment>
<comment type="catalytic activity">
    <reaction evidence="1">
        <text>an aromatic L-alpha-amino acid + 2-oxoglutarate = an aromatic oxo-acid + L-glutamate</text>
        <dbReference type="Rhea" id="RHEA:17533"/>
        <dbReference type="ChEBI" id="CHEBI:16810"/>
        <dbReference type="ChEBI" id="CHEBI:29985"/>
        <dbReference type="ChEBI" id="CHEBI:73309"/>
        <dbReference type="ChEBI" id="CHEBI:84824"/>
        <dbReference type="EC" id="2.6.1.57"/>
    </reaction>
</comment>
<comment type="cofactor">
    <cofactor evidence="1">
        <name>pyridoxal 5'-phosphate</name>
        <dbReference type="ChEBI" id="CHEBI:597326"/>
    </cofactor>
</comment>
<comment type="subunit">
    <text evidence="1">Homodimer.</text>
</comment>
<comment type="similarity">
    <text evidence="1">Belongs to the class-II pyridoxal-phosphate-dependent aminotransferase family.</text>
</comment>
<name>PATR_MYCA1</name>
<feature type="chain" id="PRO_1000024494" description="Aromatic amino acid aminotransferase">
    <location>
        <begin position="1"/>
        <end position="355"/>
    </location>
</feature>
<feature type="modified residue" description="N6-(pyridoxal phosphate)lysine" evidence="1">
    <location>
        <position position="217"/>
    </location>
</feature>
<dbReference type="EC" id="2.6.1.57" evidence="1"/>
<dbReference type="EMBL" id="CP000479">
    <property type="protein sequence ID" value="ABK66277.1"/>
    <property type="molecule type" value="Genomic_DNA"/>
</dbReference>
<dbReference type="SMR" id="A0Q9F3"/>
<dbReference type="KEGG" id="mav:MAV_0250"/>
<dbReference type="HOGENOM" id="CLU_017584_3_3_11"/>
<dbReference type="Proteomes" id="UP000001574">
    <property type="component" value="Chromosome"/>
</dbReference>
<dbReference type="GO" id="GO:0008793">
    <property type="term" value="F:aromatic-amino-acid transaminase activity"/>
    <property type="evidence" value="ECO:0007669"/>
    <property type="project" value="UniProtKB-UniRule"/>
</dbReference>
<dbReference type="GO" id="GO:0004400">
    <property type="term" value="F:histidinol-phosphate transaminase activity"/>
    <property type="evidence" value="ECO:0007669"/>
    <property type="project" value="InterPro"/>
</dbReference>
<dbReference type="GO" id="GO:0030170">
    <property type="term" value="F:pyridoxal phosphate binding"/>
    <property type="evidence" value="ECO:0007669"/>
    <property type="project" value="UniProtKB-UniRule"/>
</dbReference>
<dbReference type="GO" id="GO:0000105">
    <property type="term" value="P:L-histidine biosynthetic process"/>
    <property type="evidence" value="ECO:0007669"/>
    <property type="project" value="InterPro"/>
</dbReference>
<dbReference type="CDD" id="cd00609">
    <property type="entry name" value="AAT_like"/>
    <property type="match status" value="1"/>
</dbReference>
<dbReference type="Gene3D" id="3.90.1150.10">
    <property type="entry name" value="Aspartate Aminotransferase, domain 1"/>
    <property type="match status" value="1"/>
</dbReference>
<dbReference type="Gene3D" id="3.40.640.10">
    <property type="entry name" value="Type I PLP-dependent aspartate aminotransferase-like (Major domain)"/>
    <property type="match status" value="1"/>
</dbReference>
<dbReference type="HAMAP" id="MF_01023">
    <property type="entry name" value="HisC_aminotrans_2"/>
    <property type="match status" value="1"/>
</dbReference>
<dbReference type="HAMAP" id="MF_01513">
    <property type="entry name" value="Phe_aminotrans_2"/>
    <property type="match status" value="1"/>
</dbReference>
<dbReference type="InterPro" id="IPR001917">
    <property type="entry name" value="Aminotrans_II_pyridoxalP_BS"/>
</dbReference>
<dbReference type="InterPro" id="IPR004839">
    <property type="entry name" value="Aminotransferase_I/II_large"/>
</dbReference>
<dbReference type="InterPro" id="IPR024892">
    <property type="entry name" value="ArAT"/>
</dbReference>
<dbReference type="InterPro" id="IPR005861">
    <property type="entry name" value="HisP_aminotrans"/>
</dbReference>
<dbReference type="InterPro" id="IPR050106">
    <property type="entry name" value="HistidinolP_aminotransfase"/>
</dbReference>
<dbReference type="InterPro" id="IPR015424">
    <property type="entry name" value="PyrdxlP-dep_Trfase"/>
</dbReference>
<dbReference type="InterPro" id="IPR015421">
    <property type="entry name" value="PyrdxlP-dep_Trfase_major"/>
</dbReference>
<dbReference type="InterPro" id="IPR015422">
    <property type="entry name" value="PyrdxlP-dep_Trfase_small"/>
</dbReference>
<dbReference type="NCBIfam" id="TIGR01141">
    <property type="entry name" value="hisC"/>
    <property type="match status" value="1"/>
</dbReference>
<dbReference type="NCBIfam" id="NF002878">
    <property type="entry name" value="PRK03321.1"/>
    <property type="match status" value="1"/>
</dbReference>
<dbReference type="PANTHER" id="PTHR43643:SF3">
    <property type="entry name" value="HISTIDINOL-PHOSPHATE AMINOTRANSFERASE"/>
    <property type="match status" value="1"/>
</dbReference>
<dbReference type="PANTHER" id="PTHR43643">
    <property type="entry name" value="HISTIDINOL-PHOSPHATE AMINOTRANSFERASE 2"/>
    <property type="match status" value="1"/>
</dbReference>
<dbReference type="Pfam" id="PF00155">
    <property type="entry name" value="Aminotran_1_2"/>
    <property type="match status" value="1"/>
</dbReference>
<dbReference type="SUPFAM" id="SSF53383">
    <property type="entry name" value="PLP-dependent transferases"/>
    <property type="match status" value="1"/>
</dbReference>
<dbReference type="PROSITE" id="PS00599">
    <property type="entry name" value="AA_TRANSFER_CLASS_2"/>
    <property type="match status" value="1"/>
</dbReference>
<proteinExistence type="inferred from homology"/>
<keyword id="KW-0032">Aminotransferase</keyword>
<keyword id="KW-0663">Pyridoxal phosphate</keyword>
<keyword id="KW-0808">Transferase</keyword>
<accession>A0Q9F3</accession>
<organism>
    <name type="scientific">Mycobacterium avium (strain 104)</name>
    <dbReference type="NCBI Taxonomy" id="243243"/>
    <lineage>
        <taxon>Bacteria</taxon>
        <taxon>Bacillati</taxon>
        <taxon>Actinomycetota</taxon>
        <taxon>Actinomycetes</taxon>
        <taxon>Mycobacteriales</taxon>
        <taxon>Mycobacteriaceae</taxon>
        <taxon>Mycobacterium</taxon>
        <taxon>Mycobacterium avium complex (MAC)</taxon>
    </lineage>
</organism>
<gene>
    <name evidence="1" type="primary">pat</name>
    <name type="ordered locus">MAV_0250</name>
</gene>
<sequence length="355" mass="38019">MTARLRPELAGLPVYVPGKNVPGSIKLASNETVYGPLPSVHAAIERAVAIVNRYPDNACVDLKAALAMHLGSDVAPEQIAVGSGSVTLCQQLVQITSAAGDEVMMGWRSFECYLPIVQVAGAIAVKVPLREHTYDLDAMLAAITDRTRLIFVCNPNNPTSTVVDPDALVRFVDAVPADILIAIDEAYVEYIRDGLLPNSLELALSRSNVVVLRTFSKAYGLAGLRVGYAIGHPELITALDKVVMPFAVTNVAQAAAIASLEASGELMARTDALVAERTRVSTTLRDAGFELPPSQANFLWLPLGSRTEDFVQEAANARLVVRPFASEGVRVTIGAPAENDALLQFACDWIARTER</sequence>
<protein>
    <recommendedName>
        <fullName evidence="1">Aromatic amino acid aminotransferase</fullName>
        <shortName evidence="1">ArAT</shortName>
        <ecNumber evidence="1">2.6.1.57</ecNumber>
    </recommendedName>
</protein>
<reference key="1">
    <citation type="submission" date="2006-10" db="EMBL/GenBank/DDBJ databases">
        <authorList>
            <person name="Fleischmann R.D."/>
            <person name="Dodson R.J."/>
            <person name="Haft D.H."/>
            <person name="Merkel J.S."/>
            <person name="Nelson W.C."/>
            <person name="Fraser C.M."/>
        </authorList>
    </citation>
    <scope>NUCLEOTIDE SEQUENCE [LARGE SCALE GENOMIC DNA]</scope>
    <source>
        <strain>104</strain>
    </source>
</reference>
<evidence type="ECO:0000255" key="1">
    <source>
        <dbReference type="HAMAP-Rule" id="MF_01513"/>
    </source>
</evidence>